<evidence type="ECO:0000250" key="1"/>
<evidence type="ECO:0000256" key="2">
    <source>
        <dbReference type="SAM" id="MobiDB-lite"/>
    </source>
</evidence>
<evidence type="ECO:0000269" key="3">
    <source>
    </source>
</evidence>
<evidence type="ECO:0000269" key="4">
    <source>
    </source>
</evidence>
<evidence type="ECO:0000305" key="5"/>
<gene>
    <name type="primary">THRSP</name>
</gene>
<reference key="1">
    <citation type="journal article" date="1997" name="FEBS Lett.">
        <title>Cloning and initial characterization of human and mouse Spot 14 genes.</title>
        <authorList>
            <person name="Grillasca J.-P."/>
            <person name="Gastaldi M."/>
            <person name="Khiri H."/>
            <person name="Dace A."/>
            <person name="Peyrol N."/>
            <person name="Reynier P."/>
            <person name="Torresani J."/>
            <person name="Planells R."/>
        </authorList>
    </citation>
    <scope>NUCLEOTIDE SEQUENCE [GENOMIC DNA]</scope>
</reference>
<reference key="2">
    <citation type="journal article" date="2004" name="Nat. Genet.">
        <title>Complete sequencing and characterization of 21,243 full-length human cDNAs.</title>
        <authorList>
            <person name="Ota T."/>
            <person name="Suzuki Y."/>
            <person name="Nishikawa T."/>
            <person name="Otsuki T."/>
            <person name="Sugiyama T."/>
            <person name="Irie R."/>
            <person name="Wakamatsu A."/>
            <person name="Hayashi K."/>
            <person name="Sato H."/>
            <person name="Nagai K."/>
            <person name="Kimura K."/>
            <person name="Makita H."/>
            <person name="Sekine M."/>
            <person name="Obayashi M."/>
            <person name="Nishi T."/>
            <person name="Shibahara T."/>
            <person name="Tanaka T."/>
            <person name="Ishii S."/>
            <person name="Yamamoto J."/>
            <person name="Saito K."/>
            <person name="Kawai Y."/>
            <person name="Isono Y."/>
            <person name="Nakamura Y."/>
            <person name="Nagahari K."/>
            <person name="Murakami K."/>
            <person name="Yasuda T."/>
            <person name="Iwayanagi T."/>
            <person name="Wagatsuma M."/>
            <person name="Shiratori A."/>
            <person name="Sudo H."/>
            <person name="Hosoiri T."/>
            <person name="Kaku Y."/>
            <person name="Kodaira H."/>
            <person name="Kondo H."/>
            <person name="Sugawara M."/>
            <person name="Takahashi M."/>
            <person name="Kanda K."/>
            <person name="Yokoi T."/>
            <person name="Furuya T."/>
            <person name="Kikkawa E."/>
            <person name="Omura Y."/>
            <person name="Abe K."/>
            <person name="Kamihara K."/>
            <person name="Katsuta N."/>
            <person name="Sato K."/>
            <person name="Tanikawa M."/>
            <person name="Yamazaki M."/>
            <person name="Ninomiya K."/>
            <person name="Ishibashi T."/>
            <person name="Yamashita H."/>
            <person name="Murakawa K."/>
            <person name="Fujimori K."/>
            <person name="Tanai H."/>
            <person name="Kimata M."/>
            <person name="Watanabe M."/>
            <person name="Hiraoka S."/>
            <person name="Chiba Y."/>
            <person name="Ishida S."/>
            <person name="Ono Y."/>
            <person name="Takiguchi S."/>
            <person name="Watanabe S."/>
            <person name="Yosida M."/>
            <person name="Hotuta T."/>
            <person name="Kusano J."/>
            <person name="Kanehori K."/>
            <person name="Takahashi-Fujii A."/>
            <person name="Hara H."/>
            <person name="Tanase T.-O."/>
            <person name="Nomura Y."/>
            <person name="Togiya S."/>
            <person name="Komai F."/>
            <person name="Hara R."/>
            <person name="Takeuchi K."/>
            <person name="Arita M."/>
            <person name="Imose N."/>
            <person name="Musashino K."/>
            <person name="Yuuki H."/>
            <person name="Oshima A."/>
            <person name="Sasaki N."/>
            <person name="Aotsuka S."/>
            <person name="Yoshikawa Y."/>
            <person name="Matsunawa H."/>
            <person name="Ichihara T."/>
            <person name="Shiohata N."/>
            <person name="Sano S."/>
            <person name="Moriya S."/>
            <person name="Momiyama H."/>
            <person name="Satoh N."/>
            <person name="Takami S."/>
            <person name="Terashima Y."/>
            <person name="Suzuki O."/>
            <person name="Nakagawa S."/>
            <person name="Senoh A."/>
            <person name="Mizoguchi H."/>
            <person name="Goto Y."/>
            <person name="Shimizu F."/>
            <person name="Wakebe H."/>
            <person name="Hishigaki H."/>
            <person name="Watanabe T."/>
            <person name="Sugiyama A."/>
            <person name="Takemoto M."/>
            <person name="Kawakami B."/>
            <person name="Yamazaki M."/>
            <person name="Watanabe K."/>
            <person name="Kumagai A."/>
            <person name="Itakura S."/>
            <person name="Fukuzumi Y."/>
            <person name="Fujimori Y."/>
            <person name="Komiyama M."/>
            <person name="Tashiro H."/>
            <person name="Tanigami A."/>
            <person name="Fujiwara T."/>
            <person name="Ono T."/>
            <person name="Yamada K."/>
            <person name="Fujii Y."/>
            <person name="Ozaki K."/>
            <person name="Hirao M."/>
            <person name="Ohmori Y."/>
            <person name="Kawabata A."/>
            <person name="Hikiji T."/>
            <person name="Kobatake N."/>
            <person name="Inagaki H."/>
            <person name="Ikema Y."/>
            <person name="Okamoto S."/>
            <person name="Okitani R."/>
            <person name="Kawakami T."/>
            <person name="Noguchi S."/>
            <person name="Itoh T."/>
            <person name="Shigeta K."/>
            <person name="Senba T."/>
            <person name="Matsumura K."/>
            <person name="Nakajima Y."/>
            <person name="Mizuno T."/>
            <person name="Morinaga M."/>
            <person name="Sasaki M."/>
            <person name="Togashi T."/>
            <person name="Oyama M."/>
            <person name="Hata H."/>
            <person name="Watanabe M."/>
            <person name="Komatsu T."/>
            <person name="Mizushima-Sugano J."/>
            <person name="Satoh T."/>
            <person name="Shirai Y."/>
            <person name="Takahashi Y."/>
            <person name="Nakagawa K."/>
            <person name="Okumura K."/>
            <person name="Nagase T."/>
            <person name="Nomura N."/>
            <person name="Kikuchi H."/>
            <person name="Masuho Y."/>
            <person name="Yamashita R."/>
            <person name="Nakai K."/>
            <person name="Yada T."/>
            <person name="Nakamura Y."/>
            <person name="Ohara O."/>
            <person name="Isogai T."/>
            <person name="Sugano S."/>
        </authorList>
    </citation>
    <scope>NUCLEOTIDE SEQUENCE [LARGE SCALE MRNA]</scope>
    <source>
        <tissue>Skeletal muscle</tissue>
    </source>
</reference>
<reference key="3">
    <citation type="submission" date="2005-07" db="EMBL/GenBank/DDBJ databases">
        <authorList>
            <person name="Mural R.J."/>
            <person name="Istrail S."/>
            <person name="Sutton G.G."/>
            <person name="Florea L."/>
            <person name="Halpern A.L."/>
            <person name="Mobarry C.M."/>
            <person name="Lippert R."/>
            <person name="Walenz B."/>
            <person name="Shatkay H."/>
            <person name="Dew I."/>
            <person name="Miller J.R."/>
            <person name="Flanigan M.J."/>
            <person name="Edwards N.J."/>
            <person name="Bolanos R."/>
            <person name="Fasulo D."/>
            <person name="Halldorsson B.V."/>
            <person name="Hannenhalli S."/>
            <person name="Turner R."/>
            <person name="Yooseph S."/>
            <person name="Lu F."/>
            <person name="Nusskern D.R."/>
            <person name="Shue B.C."/>
            <person name="Zheng X.H."/>
            <person name="Zhong F."/>
            <person name="Delcher A.L."/>
            <person name="Huson D.H."/>
            <person name="Kravitz S.A."/>
            <person name="Mouchard L."/>
            <person name="Reinert K."/>
            <person name="Remington K.A."/>
            <person name="Clark A.G."/>
            <person name="Waterman M.S."/>
            <person name="Eichler E.E."/>
            <person name="Adams M.D."/>
            <person name="Hunkapiller M.W."/>
            <person name="Myers E.W."/>
            <person name="Venter J.C."/>
        </authorList>
    </citation>
    <scope>NUCLEOTIDE SEQUENCE [LARGE SCALE GENOMIC DNA]</scope>
</reference>
<reference key="4">
    <citation type="journal article" date="2004" name="Genome Res.">
        <title>The status, quality, and expansion of the NIH full-length cDNA project: the Mammalian Gene Collection (MGC).</title>
        <authorList>
            <consortium name="The MGC Project Team"/>
        </authorList>
    </citation>
    <scope>NUCLEOTIDE SEQUENCE [LARGE SCALE MRNA]</scope>
    <source>
        <tissue>Skin</tissue>
    </source>
</reference>
<reference key="5">
    <citation type="journal article" date="2007" name="Biochem. Biophys. Res. Commun.">
        <title>Human spot 14 protein interacts physically and functionally with the thyroid receptor.</title>
        <authorList>
            <person name="Chou W.Y."/>
            <person name="Cheng Y.S."/>
            <person name="Ho C.L."/>
            <person name="Liu S.T."/>
            <person name="Liu P.Y."/>
            <person name="Kuo C.C."/>
            <person name="Chang H.P."/>
            <person name="Chen Y.H."/>
            <person name="Chang G.G."/>
            <person name="Huang S.M."/>
        </authorList>
    </citation>
    <scope>INTERACTION WITH THRB</scope>
    <scope>SUBUNIT</scope>
    <scope>FUNCTION</scope>
</reference>
<reference key="6">
    <citation type="journal article" date="2008" name="Int. J. Biochem. Cell Biol.">
        <title>Human Spot 14 protein is a p53-dependent transcriptional coactivator via the recruitment of thyroid receptor and Zac1.</title>
        <authorList>
            <person name="Chou W.Y."/>
            <person name="Ho C.L."/>
            <person name="Tseng M.L."/>
            <person name="Liu S.T."/>
            <person name="Yen L.C."/>
            <person name="Huang S.M."/>
        </authorList>
    </citation>
    <scope>FUNCTION</scope>
    <scope>SUBCELLULAR LOCATION</scope>
    <scope>INTERACTION WITH PLAGL1</scope>
</reference>
<sequence>MQVLTKRYPKNCLLTVMDRYAAEVHNMEQVVMIPSLLRDVQLSGPGGQAQAEAPDLYTYFTMLKAICVDVDHGLLPREEWQAKVAGSEENGTAETEEVEDESASGELDLEAQFHLHFSSLHHILMHLTEKAQEVTRKYQEMTGQVW</sequence>
<keyword id="KW-0963">Cytoplasm</keyword>
<keyword id="KW-0444">Lipid biosynthesis</keyword>
<keyword id="KW-0443">Lipid metabolism</keyword>
<keyword id="KW-0539">Nucleus</keyword>
<keyword id="KW-1267">Proteomics identification</keyword>
<keyword id="KW-1185">Reference proteome</keyword>
<keyword id="KW-0804">Transcription</keyword>
<keyword id="KW-0805">Transcription regulation</keyword>
<protein>
    <recommendedName>
        <fullName>Thyroid hormone-inducible hepatic protein</fullName>
    </recommendedName>
    <alternativeName>
        <fullName>Spot 14 protein</fullName>
        <shortName>S14</shortName>
        <shortName>SPOT14</shortName>
    </alternativeName>
</protein>
<proteinExistence type="evidence at protein level"/>
<organism>
    <name type="scientific">Homo sapiens</name>
    <name type="common">Human</name>
    <dbReference type="NCBI Taxonomy" id="9606"/>
    <lineage>
        <taxon>Eukaryota</taxon>
        <taxon>Metazoa</taxon>
        <taxon>Chordata</taxon>
        <taxon>Craniata</taxon>
        <taxon>Vertebrata</taxon>
        <taxon>Euteleostomi</taxon>
        <taxon>Mammalia</taxon>
        <taxon>Eutheria</taxon>
        <taxon>Euarchontoglires</taxon>
        <taxon>Primates</taxon>
        <taxon>Haplorrhini</taxon>
        <taxon>Catarrhini</taxon>
        <taxon>Hominidae</taxon>
        <taxon>Homo</taxon>
    </lineage>
</organism>
<comment type="function">
    <text evidence="1 3 4">Plays a role in the regulation of lipogenesis, especially in lactating mammary gland. Important for the biosynthesis of triglycerides with medium-length fatty acid chains. May modulate lipogenesis by interacting with MID1IP1 and preventing its interaction with ACACA (By similarity). May function as transcriptional coactivator. May modulate the transcription factor activity of THRB.</text>
</comment>
<comment type="subunit">
    <text evidence="1 3 4">Homodimer. Heterodimer with MID1IP1 (By similarity). Interacts with THRB and PLAGL1.</text>
</comment>
<comment type="interaction">
    <interactant intactId="EBI-1749955">
        <id>Q92748</id>
    </interactant>
    <interactant intactId="EBI-6509505">
        <id>Q0VD86</id>
        <label>INCA1</label>
    </interactant>
    <organismsDiffer>false</organismsDiffer>
    <experiments>3</experiments>
</comment>
<comment type="interaction">
    <interactant intactId="EBI-1749955">
        <id>Q92748</id>
    </interactant>
    <interactant intactId="EBI-11139477">
        <id>Q96N21</id>
        <label>TEPSIN</label>
    </interactant>
    <organismsDiffer>false</organismsDiffer>
    <experiments>3</experiments>
</comment>
<comment type="interaction">
    <interactant intactId="EBI-1749955">
        <id>Q92748</id>
    </interactant>
    <interactant intactId="EBI-1749955">
        <id>Q92748</id>
        <label>THRSP</label>
    </interactant>
    <organismsDiffer>false</organismsDiffer>
    <experiments>4</experiments>
</comment>
<comment type="interaction">
    <interactant intactId="EBI-1749955">
        <id>Q92748</id>
    </interactant>
    <interactant intactId="EBI-12030590">
        <id>Q9H0C1</id>
        <label>ZMYND12</label>
    </interactant>
    <organismsDiffer>false</organismsDiffer>
    <experiments>3</experiments>
</comment>
<comment type="subcellular location">
    <subcellularLocation>
        <location evidence="4">Nucleus</location>
    </subcellularLocation>
    <subcellularLocation>
        <location evidence="4">Cytoplasm</location>
    </subcellularLocation>
</comment>
<comment type="tissue specificity">
    <text>Mainly expressed in tissues that synthesize triglycerides.</text>
</comment>
<comment type="similarity">
    <text evidence="5">Belongs to the SPOT14 family.</text>
</comment>
<comment type="online information" name="Atlas of Genetics and Cytogenetics in Oncology and Haematology">
    <link uri="https://atlasgeneticsoncology.org/gene/42555/THRSP"/>
</comment>
<accession>Q92748</accession>
<accession>B2R4W7</accession>
<feature type="chain" id="PRO_0000123773" description="Thyroid hormone-inducible hepatic protein">
    <location>
        <begin position="1"/>
        <end position="146"/>
    </location>
</feature>
<feature type="region of interest" description="Disordered" evidence="2">
    <location>
        <begin position="83"/>
        <end position="104"/>
    </location>
</feature>
<feature type="compositionally biased region" description="Acidic residues" evidence="2">
    <location>
        <begin position="94"/>
        <end position="104"/>
    </location>
</feature>
<name>THRSP_HUMAN</name>
<dbReference type="EMBL" id="Y08409">
    <property type="protein sequence ID" value="CAA69685.1"/>
    <property type="molecule type" value="Genomic_DNA"/>
</dbReference>
<dbReference type="EMBL" id="AK311975">
    <property type="protein sequence ID" value="BAG34914.1"/>
    <property type="molecule type" value="mRNA"/>
</dbReference>
<dbReference type="EMBL" id="CH471076">
    <property type="protein sequence ID" value="EAW75045.1"/>
    <property type="molecule type" value="Genomic_DNA"/>
</dbReference>
<dbReference type="EMBL" id="BC031989">
    <property type="protein sequence ID" value="AAH31989.1"/>
    <property type="molecule type" value="mRNA"/>
</dbReference>
<dbReference type="CCDS" id="CCDS8256.1"/>
<dbReference type="RefSeq" id="NP_003242.1">
    <property type="nucleotide sequence ID" value="NM_003251.4"/>
</dbReference>
<dbReference type="SMR" id="Q92748"/>
<dbReference type="BioGRID" id="112925">
    <property type="interactions" value="67"/>
</dbReference>
<dbReference type="DIP" id="DIP-40451N"/>
<dbReference type="FunCoup" id="Q92748">
    <property type="interactions" value="314"/>
</dbReference>
<dbReference type="IntAct" id="Q92748">
    <property type="interactions" value="66"/>
</dbReference>
<dbReference type="MINT" id="Q92748"/>
<dbReference type="STRING" id="9606.ENSP00000281030"/>
<dbReference type="PhosphoSitePlus" id="Q92748"/>
<dbReference type="BioMuta" id="THRSP"/>
<dbReference type="DMDM" id="2842710"/>
<dbReference type="MassIVE" id="Q92748"/>
<dbReference type="PaxDb" id="9606-ENSP00000281030"/>
<dbReference type="PeptideAtlas" id="Q92748"/>
<dbReference type="ProteomicsDB" id="75439"/>
<dbReference type="Antibodypedia" id="31292">
    <property type="antibodies" value="195 antibodies from 31 providers"/>
</dbReference>
<dbReference type="DNASU" id="7069"/>
<dbReference type="Ensembl" id="ENST00000281030.2">
    <property type="protein sequence ID" value="ENSP00000281030.2"/>
    <property type="gene ID" value="ENSG00000151365.2"/>
</dbReference>
<dbReference type="GeneID" id="7069"/>
<dbReference type="KEGG" id="hsa:7069"/>
<dbReference type="MANE-Select" id="ENST00000281030.2">
    <property type="protein sequence ID" value="ENSP00000281030.2"/>
    <property type="RefSeq nucleotide sequence ID" value="NM_003251.4"/>
    <property type="RefSeq protein sequence ID" value="NP_003242.1"/>
</dbReference>
<dbReference type="UCSC" id="uc001oyx.4">
    <property type="organism name" value="human"/>
</dbReference>
<dbReference type="AGR" id="HGNC:11800"/>
<dbReference type="CTD" id="7069"/>
<dbReference type="DisGeNET" id="7069"/>
<dbReference type="GeneCards" id="THRSP"/>
<dbReference type="HGNC" id="HGNC:11800">
    <property type="gene designation" value="THRSP"/>
</dbReference>
<dbReference type="HPA" id="ENSG00000151365">
    <property type="expression patterns" value="Tissue enhanced (adipose tissue, liver)"/>
</dbReference>
<dbReference type="MIM" id="601926">
    <property type="type" value="gene"/>
</dbReference>
<dbReference type="neXtProt" id="NX_Q92748"/>
<dbReference type="OpenTargets" id="ENSG00000151365"/>
<dbReference type="PharmGKB" id="PA36509"/>
<dbReference type="VEuPathDB" id="HostDB:ENSG00000151365"/>
<dbReference type="eggNOG" id="ENOG502S7IQ">
    <property type="taxonomic scope" value="Eukaryota"/>
</dbReference>
<dbReference type="GeneTree" id="ENSGT00500000044890"/>
<dbReference type="HOGENOM" id="CLU_066079_1_0_1"/>
<dbReference type="InParanoid" id="Q92748"/>
<dbReference type="OMA" id="FASLHHI"/>
<dbReference type="OrthoDB" id="9450804at2759"/>
<dbReference type="PAN-GO" id="Q92748">
    <property type="GO annotations" value="2 GO annotations based on evolutionary models"/>
</dbReference>
<dbReference type="PhylomeDB" id="Q92748"/>
<dbReference type="TreeFam" id="TF326826"/>
<dbReference type="PathwayCommons" id="Q92748"/>
<dbReference type="Reactome" id="R-HSA-200425">
    <property type="pathway name" value="Carnitine shuttle"/>
</dbReference>
<dbReference type="Reactome" id="R-HSA-9841922">
    <property type="pathway name" value="MLL4 and MLL3 complexes regulate expression of PPARG target genes in adipogenesis and hepatic steatosis"/>
</dbReference>
<dbReference type="SignaLink" id="Q92748"/>
<dbReference type="SIGNOR" id="Q92748"/>
<dbReference type="BioGRID-ORCS" id="7069">
    <property type="hits" value="17 hits in 1156 CRISPR screens"/>
</dbReference>
<dbReference type="GeneWiki" id="THRSP"/>
<dbReference type="GenomeRNAi" id="7069"/>
<dbReference type="Pharos" id="Q92748">
    <property type="development level" value="Tbio"/>
</dbReference>
<dbReference type="PRO" id="PR:Q92748"/>
<dbReference type="Proteomes" id="UP000005640">
    <property type="component" value="Chromosome 11"/>
</dbReference>
<dbReference type="RNAct" id="Q92748">
    <property type="molecule type" value="protein"/>
</dbReference>
<dbReference type="Bgee" id="ENSG00000151365">
    <property type="expression patterns" value="Expressed in upper leg skin and 124 other cell types or tissues"/>
</dbReference>
<dbReference type="GO" id="GO:0005829">
    <property type="term" value="C:cytosol"/>
    <property type="evidence" value="ECO:0000250"/>
    <property type="project" value="UniProtKB"/>
</dbReference>
<dbReference type="GO" id="GO:0005654">
    <property type="term" value="C:nucleoplasm"/>
    <property type="evidence" value="ECO:0000314"/>
    <property type="project" value="HPA"/>
</dbReference>
<dbReference type="GO" id="GO:0042802">
    <property type="term" value="F:identical protein binding"/>
    <property type="evidence" value="ECO:0000353"/>
    <property type="project" value="IntAct"/>
</dbReference>
<dbReference type="GO" id="GO:0140678">
    <property type="term" value="F:molecular function inhibitor activity"/>
    <property type="evidence" value="ECO:0007669"/>
    <property type="project" value="Ensembl"/>
</dbReference>
<dbReference type="GO" id="GO:0042803">
    <property type="term" value="F:protein homodimerization activity"/>
    <property type="evidence" value="ECO:0007669"/>
    <property type="project" value="Ensembl"/>
</dbReference>
<dbReference type="GO" id="GO:0006629">
    <property type="term" value="P:lipid metabolic process"/>
    <property type="evidence" value="ECO:0000304"/>
    <property type="project" value="ProtInc"/>
</dbReference>
<dbReference type="GO" id="GO:0046890">
    <property type="term" value="P:regulation of lipid biosynthetic process"/>
    <property type="evidence" value="ECO:0000250"/>
    <property type="project" value="UniProtKB"/>
</dbReference>
<dbReference type="GO" id="GO:0010866">
    <property type="term" value="P:regulation of triglyceride biosynthetic process"/>
    <property type="evidence" value="ECO:0007669"/>
    <property type="project" value="Ensembl"/>
</dbReference>
<dbReference type="GO" id="GO:0009617">
    <property type="term" value="P:response to bacterium"/>
    <property type="evidence" value="ECO:0007669"/>
    <property type="project" value="Ensembl"/>
</dbReference>
<dbReference type="Gene3D" id="6.10.140.1610">
    <property type="match status" value="1"/>
</dbReference>
<dbReference type="InterPro" id="IPR053719">
    <property type="entry name" value="Lipogen_MT_Stabilize_sf"/>
</dbReference>
<dbReference type="InterPro" id="IPR009786">
    <property type="entry name" value="Spot_14"/>
</dbReference>
<dbReference type="PANTHER" id="PTHR14315">
    <property type="entry name" value="SPOT14 FAMILY MEMBER"/>
    <property type="match status" value="1"/>
</dbReference>
<dbReference type="PANTHER" id="PTHR14315:SF18">
    <property type="entry name" value="THYROID HORMONE-INDUCIBLE HEPATIC PROTEIN"/>
    <property type="match status" value="1"/>
</dbReference>
<dbReference type="Pfam" id="PF07084">
    <property type="entry name" value="Spot_14"/>
    <property type="match status" value="1"/>
</dbReference>